<comment type="catalytic activity">
    <reaction evidence="1">
        <text>D-erythro-1-(imidazol-4-yl)glycerol 3-phosphate = 3-(imidazol-4-yl)-2-oxopropyl phosphate + H2O</text>
        <dbReference type="Rhea" id="RHEA:11040"/>
        <dbReference type="ChEBI" id="CHEBI:15377"/>
        <dbReference type="ChEBI" id="CHEBI:57766"/>
        <dbReference type="ChEBI" id="CHEBI:58278"/>
        <dbReference type="EC" id="4.2.1.19"/>
    </reaction>
</comment>
<comment type="pathway">
    <text evidence="1">Amino-acid biosynthesis; L-histidine biosynthesis; L-histidine from 5-phospho-alpha-D-ribose 1-diphosphate: step 6/9.</text>
</comment>
<comment type="subcellular location">
    <subcellularLocation>
        <location evidence="1">Cytoplasm</location>
    </subcellularLocation>
</comment>
<comment type="similarity">
    <text evidence="1">Belongs to the imidazoleglycerol-phosphate dehydratase family.</text>
</comment>
<organism>
    <name type="scientific">Staphylococcus aureus (strain NCTC 8325 / PS 47)</name>
    <dbReference type="NCBI Taxonomy" id="93061"/>
    <lineage>
        <taxon>Bacteria</taxon>
        <taxon>Bacillati</taxon>
        <taxon>Bacillota</taxon>
        <taxon>Bacilli</taxon>
        <taxon>Bacillales</taxon>
        <taxon>Staphylococcaceae</taxon>
        <taxon>Staphylococcus</taxon>
    </lineage>
</organism>
<name>HIS7_STAA8</name>
<gene>
    <name evidence="1" type="primary">hisB</name>
    <name type="ordered locus">SAOUHSC_03011</name>
</gene>
<sequence length="192" mass="21456">MIYQKQRNTAETQLNISISDDQSPSHINTGVGFLNHMLTLFTFHSGLSLNIEAQGDIDVDDHHVTEDIGIVIGQLLLEMIKDKKHFVRYGTMYIPMDETLARVVVDISGRPYLSFNASLSKEKVGTFDTELVEEFFRAVVINARLTTHIDLIRGGNTHHEIEAIFKAFSRALGIALTATDDQRVPSSKGVIE</sequence>
<proteinExistence type="inferred from homology"/>
<accession>Q2FUU0</accession>
<evidence type="ECO:0000255" key="1">
    <source>
        <dbReference type="HAMAP-Rule" id="MF_00076"/>
    </source>
</evidence>
<keyword id="KW-0028">Amino-acid biosynthesis</keyword>
<keyword id="KW-0963">Cytoplasm</keyword>
<keyword id="KW-0368">Histidine biosynthesis</keyword>
<keyword id="KW-0456">Lyase</keyword>
<keyword id="KW-1185">Reference proteome</keyword>
<protein>
    <recommendedName>
        <fullName evidence="1">Imidazoleglycerol-phosphate dehydratase</fullName>
        <shortName evidence="1">IGPD</shortName>
        <ecNumber evidence="1">4.2.1.19</ecNumber>
    </recommendedName>
</protein>
<reference key="1">
    <citation type="book" date="2006" name="Gram positive pathogens, 2nd edition">
        <title>The Staphylococcus aureus NCTC 8325 genome.</title>
        <editorList>
            <person name="Fischetti V."/>
            <person name="Novick R."/>
            <person name="Ferretti J."/>
            <person name="Portnoy D."/>
            <person name="Rood J."/>
        </editorList>
        <authorList>
            <person name="Gillaspy A.F."/>
            <person name="Worrell V."/>
            <person name="Orvis J."/>
            <person name="Roe B.A."/>
            <person name="Dyer D.W."/>
            <person name="Iandolo J.J."/>
        </authorList>
    </citation>
    <scope>NUCLEOTIDE SEQUENCE [LARGE SCALE GENOMIC DNA]</scope>
    <source>
        <strain>NCTC 8325 / PS 47</strain>
    </source>
</reference>
<dbReference type="EC" id="4.2.1.19" evidence="1"/>
<dbReference type="EMBL" id="CP000253">
    <property type="protein sequence ID" value="ABD31997.1"/>
    <property type="molecule type" value="Genomic_DNA"/>
</dbReference>
<dbReference type="RefSeq" id="WP_000640266.1">
    <property type="nucleotide sequence ID" value="NZ_LS483365.1"/>
</dbReference>
<dbReference type="RefSeq" id="YP_501460.1">
    <property type="nucleotide sequence ID" value="NC_007795.1"/>
</dbReference>
<dbReference type="SMR" id="Q2FUU0"/>
<dbReference type="STRING" id="93061.SAOUHSC_03011"/>
<dbReference type="PaxDb" id="1280-SAXN108_2950"/>
<dbReference type="GeneID" id="3921492"/>
<dbReference type="KEGG" id="sao:SAOUHSC_03011"/>
<dbReference type="PATRIC" id="fig|93061.5.peg.2719"/>
<dbReference type="eggNOG" id="COG0131">
    <property type="taxonomic scope" value="Bacteria"/>
</dbReference>
<dbReference type="HOGENOM" id="CLU_044308_3_0_9"/>
<dbReference type="OrthoDB" id="9790411at2"/>
<dbReference type="UniPathway" id="UPA00031">
    <property type="reaction ID" value="UER00011"/>
</dbReference>
<dbReference type="PRO" id="PR:Q2FUU0"/>
<dbReference type="Proteomes" id="UP000008816">
    <property type="component" value="Chromosome"/>
</dbReference>
<dbReference type="GO" id="GO:0005737">
    <property type="term" value="C:cytoplasm"/>
    <property type="evidence" value="ECO:0007669"/>
    <property type="project" value="UniProtKB-SubCell"/>
</dbReference>
<dbReference type="GO" id="GO:0004424">
    <property type="term" value="F:imidazoleglycerol-phosphate dehydratase activity"/>
    <property type="evidence" value="ECO:0000318"/>
    <property type="project" value="GO_Central"/>
</dbReference>
<dbReference type="GO" id="GO:0000105">
    <property type="term" value="P:L-histidine biosynthetic process"/>
    <property type="evidence" value="ECO:0000318"/>
    <property type="project" value="GO_Central"/>
</dbReference>
<dbReference type="CDD" id="cd07914">
    <property type="entry name" value="IGPD"/>
    <property type="match status" value="1"/>
</dbReference>
<dbReference type="FunFam" id="3.30.230.40:FF:000001">
    <property type="entry name" value="Imidazoleglycerol-phosphate dehydratase HisB"/>
    <property type="match status" value="1"/>
</dbReference>
<dbReference type="FunFam" id="3.30.230.40:FF:000003">
    <property type="entry name" value="Imidazoleglycerol-phosphate dehydratase HisB"/>
    <property type="match status" value="1"/>
</dbReference>
<dbReference type="Gene3D" id="3.30.230.40">
    <property type="entry name" value="Imidazole glycerol phosphate dehydratase, domain 1"/>
    <property type="match status" value="2"/>
</dbReference>
<dbReference type="HAMAP" id="MF_00076">
    <property type="entry name" value="HisB"/>
    <property type="match status" value="1"/>
</dbReference>
<dbReference type="InterPro" id="IPR038494">
    <property type="entry name" value="IGPD_sf"/>
</dbReference>
<dbReference type="InterPro" id="IPR000807">
    <property type="entry name" value="ImidazoleglycerolP_deHydtase"/>
</dbReference>
<dbReference type="InterPro" id="IPR020565">
    <property type="entry name" value="ImidazoleglycerP_deHydtase_CS"/>
</dbReference>
<dbReference type="InterPro" id="IPR020568">
    <property type="entry name" value="Ribosomal_Su5_D2-typ_SF"/>
</dbReference>
<dbReference type="NCBIfam" id="NF002107">
    <property type="entry name" value="PRK00951.1-2"/>
    <property type="match status" value="1"/>
</dbReference>
<dbReference type="NCBIfam" id="NF002111">
    <property type="entry name" value="PRK00951.2-1"/>
    <property type="match status" value="1"/>
</dbReference>
<dbReference type="NCBIfam" id="NF002114">
    <property type="entry name" value="PRK00951.2-4"/>
    <property type="match status" value="1"/>
</dbReference>
<dbReference type="PANTHER" id="PTHR23133:SF2">
    <property type="entry name" value="IMIDAZOLEGLYCEROL-PHOSPHATE DEHYDRATASE"/>
    <property type="match status" value="1"/>
</dbReference>
<dbReference type="PANTHER" id="PTHR23133">
    <property type="entry name" value="IMIDAZOLEGLYCEROL-PHOSPHATE DEHYDRATASE HIS7"/>
    <property type="match status" value="1"/>
</dbReference>
<dbReference type="Pfam" id="PF00475">
    <property type="entry name" value="IGPD"/>
    <property type="match status" value="1"/>
</dbReference>
<dbReference type="SUPFAM" id="SSF54211">
    <property type="entry name" value="Ribosomal protein S5 domain 2-like"/>
    <property type="match status" value="2"/>
</dbReference>
<dbReference type="PROSITE" id="PS00954">
    <property type="entry name" value="IGP_DEHYDRATASE_1"/>
    <property type="match status" value="1"/>
</dbReference>
<dbReference type="PROSITE" id="PS00955">
    <property type="entry name" value="IGP_DEHYDRATASE_2"/>
    <property type="match status" value="1"/>
</dbReference>
<feature type="chain" id="PRO_1000010357" description="Imidazoleglycerol-phosphate dehydratase">
    <location>
        <begin position="1"/>
        <end position="192"/>
    </location>
</feature>